<sequence length="49" mass="5696">MARNEAAIKRTLEKQICMRCNARNPQRASECRKCGYSNLRPKSKERRAA</sequence>
<feature type="chain" id="PRO_1000083598" description="Large ribosomal subunit protein eL40">
    <location>
        <begin position="1"/>
        <end position="49"/>
    </location>
</feature>
<accession>Q18KJ5</accession>
<proteinExistence type="inferred from homology"/>
<evidence type="ECO:0000255" key="1">
    <source>
        <dbReference type="HAMAP-Rule" id="MF_00788"/>
    </source>
</evidence>
<evidence type="ECO:0000305" key="2"/>
<reference key="1">
    <citation type="journal article" date="2006" name="BMC Genomics">
        <title>The genome of the square archaeon Haloquadratum walsbyi: life at the limits of water activity.</title>
        <authorList>
            <person name="Bolhuis H."/>
            <person name="Palm P."/>
            <person name="Wende A."/>
            <person name="Falb M."/>
            <person name="Rampp M."/>
            <person name="Rodriguez-Valera F."/>
            <person name="Pfeiffer F."/>
            <person name="Oesterhelt D."/>
        </authorList>
    </citation>
    <scope>NUCLEOTIDE SEQUENCE [LARGE SCALE GENOMIC DNA]</scope>
    <source>
        <strain>DSM 16790 / HBSQ001</strain>
    </source>
</reference>
<protein>
    <recommendedName>
        <fullName evidence="1">Large ribosomal subunit protein eL40</fullName>
    </recommendedName>
    <alternativeName>
        <fullName evidence="2">50S ribosomal protein L40e</fullName>
    </alternativeName>
</protein>
<keyword id="KW-1185">Reference proteome</keyword>
<keyword id="KW-0687">Ribonucleoprotein</keyword>
<keyword id="KW-0689">Ribosomal protein</keyword>
<comment type="similarity">
    <text evidence="1">Belongs to the eukaryotic ribosomal protein eL40 family.</text>
</comment>
<gene>
    <name evidence="1" type="primary">rpl40e</name>
    <name type="ordered locus">HQ_1324A</name>
</gene>
<name>RL40_HALWD</name>
<organism>
    <name type="scientific">Haloquadratum walsbyi (strain DSM 16790 / HBSQ001)</name>
    <dbReference type="NCBI Taxonomy" id="362976"/>
    <lineage>
        <taxon>Archaea</taxon>
        <taxon>Methanobacteriati</taxon>
        <taxon>Methanobacteriota</taxon>
        <taxon>Stenosarchaea group</taxon>
        <taxon>Halobacteria</taxon>
        <taxon>Halobacteriales</taxon>
        <taxon>Haloferacaceae</taxon>
        <taxon>Haloquadratum</taxon>
    </lineage>
</organism>
<dbReference type="EMBL" id="AM180088">
    <property type="protein sequence ID" value="CAJ51453.1"/>
    <property type="molecule type" value="Genomic_DNA"/>
</dbReference>
<dbReference type="RefSeq" id="WP_011570611.1">
    <property type="nucleotide sequence ID" value="NC_008212.1"/>
</dbReference>
<dbReference type="SMR" id="Q18KJ5"/>
<dbReference type="STRING" id="362976.HQ_1324A"/>
<dbReference type="KEGG" id="hwa:HQ_1324A"/>
<dbReference type="eggNOG" id="arCOG04049">
    <property type="taxonomic scope" value="Archaea"/>
</dbReference>
<dbReference type="HOGENOM" id="CLU_205640_0_0_2"/>
<dbReference type="Proteomes" id="UP000001975">
    <property type="component" value="Chromosome"/>
</dbReference>
<dbReference type="GO" id="GO:1990904">
    <property type="term" value="C:ribonucleoprotein complex"/>
    <property type="evidence" value="ECO:0007669"/>
    <property type="project" value="UniProtKB-KW"/>
</dbReference>
<dbReference type="GO" id="GO:0005840">
    <property type="term" value="C:ribosome"/>
    <property type="evidence" value="ECO:0007669"/>
    <property type="project" value="UniProtKB-KW"/>
</dbReference>
<dbReference type="GO" id="GO:0003735">
    <property type="term" value="F:structural constituent of ribosome"/>
    <property type="evidence" value="ECO:0007669"/>
    <property type="project" value="InterPro"/>
</dbReference>
<dbReference type="GO" id="GO:0006412">
    <property type="term" value="P:translation"/>
    <property type="evidence" value="ECO:0007669"/>
    <property type="project" value="UniProtKB-UniRule"/>
</dbReference>
<dbReference type="Gene3D" id="4.10.1060.50">
    <property type="match status" value="1"/>
</dbReference>
<dbReference type="HAMAP" id="MF_00788">
    <property type="entry name" value="Ribosomal_eL40"/>
    <property type="match status" value="1"/>
</dbReference>
<dbReference type="InterPro" id="IPR023657">
    <property type="entry name" value="Ribosomal_eL40_arc"/>
</dbReference>
<dbReference type="InterPro" id="IPR001975">
    <property type="entry name" value="Ribosomal_eL40_dom"/>
</dbReference>
<dbReference type="InterPro" id="IPR038587">
    <property type="entry name" value="Ribosomal_eL40_sf"/>
</dbReference>
<dbReference type="InterPro" id="IPR011332">
    <property type="entry name" value="Ribosomal_zn-bd"/>
</dbReference>
<dbReference type="NCBIfam" id="NF003161">
    <property type="entry name" value="PRK04136.1"/>
    <property type="match status" value="1"/>
</dbReference>
<dbReference type="PANTHER" id="PTHR39649">
    <property type="entry name" value="50S RIBOSOMAL PROTEIN L40E"/>
    <property type="match status" value="1"/>
</dbReference>
<dbReference type="PANTHER" id="PTHR39649:SF1">
    <property type="entry name" value="LARGE RIBOSOMAL SUBUNIT PROTEIN EL40"/>
    <property type="match status" value="1"/>
</dbReference>
<dbReference type="Pfam" id="PF01020">
    <property type="entry name" value="Ribosomal_L40e"/>
    <property type="match status" value="1"/>
</dbReference>
<dbReference type="SMART" id="SM01377">
    <property type="entry name" value="Ribosomal_L40e"/>
    <property type="match status" value="1"/>
</dbReference>
<dbReference type="SUPFAM" id="SSF57829">
    <property type="entry name" value="Zn-binding ribosomal proteins"/>
    <property type="match status" value="1"/>
</dbReference>